<organism>
    <name type="scientific">Kribbella flavida (strain DSM 17836 / JCM 10339 / NBRC 14399)</name>
    <dbReference type="NCBI Taxonomy" id="479435"/>
    <lineage>
        <taxon>Bacteria</taxon>
        <taxon>Bacillati</taxon>
        <taxon>Actinomycetota</taxon>
        <taxon>Actinomycetes</taxon>
        <taxon>Propionibacteriales</taxon>
        <taxon>Kribbellaceae</taxon>
        <taxon>Kribbella</taxon>
    </lineage>
</organism>
<gene>
    <name evidence="1" type="primary">pafA</name>
    <name type="ordered locus">Kfla_5110</name>
</gene>
<dbReference type="EC" id="6.3.1.19" evidence="1"/>
<dbReference type="EMBL" id="CP001736">
    <property type="protein sequence ID" value="ADB34126.1"/>
    <property type="molecule type" value="Genomic_DNA"/>
</dbReference>
<dbReference type="RefSeq" id="WP_012922680.1">
    <property type="nucleotide sequence ID" value="NC_013729.1"/>
</dbReference>
<dbReference type="SMR" id="D2Q3K3"/>
<dbReference type="STRING" id="479435.Kfla_5110"/>
<dbReference type="MEROPS" id="U72.001"/>
<dbReference type="KEGG" id="kfl:Kfla_5110"/>
<dbReference type="eggNOG" id="COG0638">
    <property type="taxonomic scope" value="Bacteria"/>
</dbReference>
<dbReference type="HOGENOM" id="CLU_040524_0_1_11"/>
<dbReference type="OrthoDB" id="9760627at2"/>
<dbReference type="UniPathway" id="UPA00997"/>
<dbReference type="UniPathway" id="UPA00998"/>
<dbReference type="Proteomes" id="UP000007967">
    <property type="component" value="Chromosome"/>
</dbReference>
<dbReference type="GO" id="GO:0005524">
    <property type="term" value="F:ATP binding"/>
    <property type="evidence" value="ECO:0007669"/>
    <property type="project" value="UniProtKB-UniRule"/>
</dbReference>
<dbReference type="GO" id="GO:0016879">
    <property type="term" value="F:ligase activity, forming carbon-nitrogen bonds"/>
    <property type="evidence" value="ECO:0007669"/>
    <property type="project" value="InterPro"/>
</dbReference>
<dbReference type="GO" id="GO:0000287">
    <property type="term" value="F:magnesium ion binding"/>
    <property type="evidence" value="ECO:0007669"/>
    <property type="project" value="UniProtKB-UniRule"/>
</dbReference>
<dbReference type="GO" id="GO:0019787">
    <property type="term" value="F:ubiquitin-like protein transferase activity"/>
    <property type="evidence" value="ECO:0007669"/>
    <property type="project" value="UniProtKB-UniRule"/>
</dbReference>
<dbReference type="GO" id="GO:0019941">
    <property type="term" value="P:modification-dependent protein catabolic process"/>
    <property type="evidence" value="ECO:0007669"/>
    <property type="project" value="UniProtKB-UniRule"/>
</dbReference>
<dbReference type="GO" id="GO:0010498">
    <property type="term" value="P:proteasomal protein catabolic process"/>
    <property type="evidence" value="ECO:0007669"/>
    <property type="project" value="UniProtKB-UniRule"/>
</dbReference>
<dbReference type="GO" id="GO:0070490">
    <property type="term" value="P:protein pupylation"/>
    <property type="evidence" value="ECO:0007669"/>
    <property type="project" value="UniProtKB-UniRule"/>
</dbReference>
<dbReference type="HAMAP" id="MF_02111">
    <property type="entry name" value="Pup_ligase"/>
    <property type="match status" value="1"/>
</dbReference>
<dbReference type="InterPro" id="IPR022279">
    <property type="entry name" value="Pup_ligase"/>
</dbReference>
<dbReference type="InterPro" id="IPR004347">
    <property type="entry name" value="Pup_ligase/deamidase"/>
</dbReference>
<dbReference type="NCBIfam" id="TIGR03686">
    <property type="entry name" value="pupylate_PafA"/>
    <property type="match status" value="1"/>
</dbReference>
<dbReference type="PANTHER" id="PTHR42307">
    <property type="entry name" value="PUP DEAMIDASE/DEPUPYLASE"/>
    <property type="match status" value="1"/>
</dbReference>
<dbReference type="PANTHER" id="PTHR42307:SF3">
    <property type="entry name" value="PUP--PROTEIN LIGASE"/>
    <property type="match status" value="1"/>
</dbReference>
<dbReference type="Pfam" id="PF03136">
    <property type="entry name" value="Pup_ligase"/>
    <property type="match status" value="1"/>
</dbReference>
<dbReference type="PIRSF" id="PIRSF018077">
    <property type="entry name" value="UCP018077"/>
    <property type="match status" value="1"/>
</dbReference>
<name>PAFA_KRIFD</name>
<keyword id="KW-0067">ATP-binding</keyword>
<keyword id="KW-0436">Ligase</keyword>
<keyword id="KW-0460">Magnesium</keyword>
<keyword id="KW-0479">Metal-binding</keyword>
<keyword id="KW-0547">Nucleotide-binding</keyword>
<keyword id="KW-1185">Reference proteome</keyword>
<keyword id="KW-0833">Ubl conjugation pathway</keyword>
<feature type="chain" id="PRO_0000395921" description="Pup--protein ligase">
    <location>
        <begin position="1"/>
        <end position="453"/>
    </location>
</feature>
<feature type="active site" description="Proton acceptor" evidence="1">
    <location>
        <position position="57"/>
    </location>
</feature>
<feature type="binding site" evidence="1">
    <location>
        <position position="9"/>
    </location>
    <ligand>
        <name>Mg(2+)</name>
        <dbReference type="ChEBI" id="CHEBI:18420"/>
    </ligand>
</feature>
<feature type="binding site" evidence="1">
    <location>
        <position position="53"/>
    </location>
    <ligand>
        <name>ATP</name>
        <dbReference type="ChEBI" id="CHEBI:30616"/>
    </ligand>
</feature>
<feature type="binding site" evidence="1">
    <location>
        <position position="55"/>
    </location>
    <ligand>
        <name>Mg(2+)</name>
        <dbReference type="ChEBI" id="CHEBI:18420"/>
    </ligand>
</feature>
<feature type="binding site" evidence="1">
    <location>
        <position position="63"/>
    </location>
    <ligand>
        <name>Mg(2+)</name>
        <dbReference type="ChEBI" id="CHEBI:18420"/>
    </ligand>
</feature>
<feature type="binding site" evidence="1">
    <location>
        <position position="66"/>
    </location>
    <ligand>
        <name>ATP</name>
        <dbReference type="ChEBI" id="CHEBI:30616"/>
    </ligand>
</feature>
<feature type="binding site" evidence="1">
    <location>
        <position position="420"/>
    </location>
    <ligand>
        <name>ATP</name>
        <dbReference type="ChEBI" id="CHEBI:30616"/>
    </ligand>
</feature>
<reference key="1">
    <citation type="submission" date="2009-09" db="EMBL/GenBank/DDBJ databases">
        <title>The complete genome of Kribbella flavida DSM 17836.</title>
        <authorList>
            <consortium name="US DOE Joint Genome Institute (JGI-PGF)"/>
            <person name="Lucas S."/>
            <person name="Copeland A."/>
            <person name="Lapidus A."/>
            <person name="Glavina del Rio T."/>
            <person name="Dalin E."/>
            <person name="Tice H."/>
            <person name="Bruce D."/>
            <person name="Goodwin L."/>
            <person name="Pitluck S."/>
            <person name="Kyrpides N."/>
            <person name="Mavromatis K."/>
            <person name="Ivanova N."/>
            <person name="Saunders E."/>
            <person name="Brettin T."/>
            <person name="Detter J.C."/>
            <person name="Han C."/>
            <person name="Larimer F."/>
            <person name="Land M."/>
            <person name="Hauser L."/>
            <person name="Markowitz V."/>
            <person name="Cheng J.-F."/>
            <person name="Hugenholtz P."/>
            <person name="Woyke T."/>
            <person name="Wu D."/>
            <person name="Pukall R."/>
            <person name="Klenk H.-P."/>
            <person name="Eisen J.A."/>
        </authorList>
    </citation>
    <scope>NUCLEOTIDE SEQUENCE [LARGE SCALE GENOMIC DNA]</scope>
    <source>
        <strain>DSM 17836 / JCM 10339 / NBRC 14399</strain>
    </source>
</reference>
<proteinExistence type="inferred from homology"/>
<comment type="function">
    <text evidence="1">Catalyzes the covalent attachment of the prokaryotic ubiquitin-like protein modifier Pup to the proteasomal substrate proteins, thereby targeting them for proteasomal degradation. This tagging system is termed pupylation. The ligation reaction involves the side-chain carboxylate of the C-terminal glutamate of Pup and the side-chain amino group of a substrate lysine.</text>
</comment>
<comment type="catalytic activity">
    <reaction evidence="1">
        <text>ATP + [prokaryotic ubiquitin-like protein]-L-glutamate + [protein]-L-lysine = ADP + phosphate + N(6)-([prokaryotic ubiquitin-like protein]-gamma-L-glutamyl)-[protein]-L-lysine.</text>
        <dbReference type="EC" id="6.3.1.19"/>
    </reaction>
</comment>
<comment type="pathway">
    <text evidence="1">Protein degradation; proteasomal Pup-dependent pathway.</text>
</comment>
<comment type="pathway">
    <text evidence="1">Protein modification; protein pupylation.</text>
</comment>
<comment type="miscellaneous">
    <text evidence="1">The reaction mechanism probably proceeds via the activation of Pup by phosphorylation of its C-terminal glutamate, which is then subject to nucleophilic attack by the substrate lysine, resulting in an isopeptide bond and the release of phosphate as a good leaving group.</text>
</comment>
<comment type="similarity">
    <text evidence="1">Belongs to the Pup ligase/Pup deamidase family. Pup-conjugating enzyme subfamily.</text>
</comment>
<accession>D2Q3K3</accession>
<sequence length="453" mass="51771">MNRRIFGLENEYGVTCTFRGQRRLTPDEVARYLFRRVVSWGRSSNVFLRNGARLYLDVGSHPEYATGECDSVTDLIAHDKAGERILEGLLVDAQKRLHDEGIFGDVYLFKNNTDSAGNSYGCHENYLVSRHGDFAKLADVLIPFLVTRQLICGAGKVLQTPRGAVYSVSQRAEHIWEGVSSATTRSRPIINTRDEPHADAERFRRLHVIVGDSNMSETTMLLKVASTDLVLRMIEAGIVMRDLTLDNPIRAIREISHDMTGRREVRLANGREASALDIQGEYLSKARDFVDRRELGTPAVERALSLWERTLKAIESGDLSGIEREIDWVIKYRLIERYRAQNNLGLASPRVAQLDLAYHDIHRPRGLYYLLERKGAVTRVVDDLRVFEAKSVPPQTTRARLRGEFIKRAQERRRDFTVDWVHLKLNDQAQRTVLCKDPFKSHDERVEKLIASM</sequence>
<protein>
    <recommendedName>
        <fullName evidence="1">Pup--protein ligase</fullName>
        <ecNumber evidence="1">6.3.1.19</ecNumber>
    </recommendedName>
    <alternativeName>
        <fullName evidence="1">Proteasome accessory factor A</fullName>
    </alternativeName>
    <alternativeName>
        <fullName evidence="1">Pup-conjugating enzyme</fullName>
    </alternativeName>
</protein>
<evidence type="ECO:0000255" key="1">
    <source>
        <dbReference type="HAMAP-Rule" id="MF_02111"/>
    </source>
</evidence>